<dbReference type="EC" id="6.1.1.1" evidence="1"/>
<dbReference type="EMBL" id="CP000031">
    <property type="protein sequence ID" value="AAV95737.1"/>
    <property type="molecule type" value="Genomic_DNA"/>
</dbReference>
<dbReference type="RefSeq" id="WP_011048192.1">
    <property type="nucleotide sequence ID" value="NC_003911.12"/>
</dbReference>
<dbReference type="SMR" id="Q5LQK5"/>
<dbReference type="STRING" id="246200.SPO2484"/>
<dbReference type="PaxDb" id="246200-SPO2484"/>
<dbReference type="KEGG" id="sil:SPO2484"/>
<dbReference type="eggNOG" id="COG0162">
    <property type="taxonomic scope" value="Bacteria"/>
</dbReference>
<dbReference type="HOGENOM" id="CLU_024003_0_3_5"/>
<dbReference type="OrthoDB" id="9804243at2"/>
<dbReference type="Proteomes" id="UP000001023">
    <property type="component" value="Chromosome"/>
</dbReference>
<dbReference type="GO" id="GO:0005829">
    <property type="term" value="C:cytosol"/>
    <property type="evidence" value="ECO:0007669"/>
    <property type="project" value="TreeGrafter"/>
</dbReference>
<dbReference type="GO" id="GO:0005524">
    <property type="term" value="F:ATP binding"/>
    <property type="evidence" value="ECO:0007669"/>
    <property type="project" value="UniProtKB-UniRule"/>
</dbReference>
<dbReference type="GO" id="GO:0003723">
    <property type="term" value="F:RNA binding"/>
    <property type="evidence" value="ECO:0007669"/>
    <property type="project" value="UniProtKB-KW"/>
</dbReference>
<dbReference type="GO" id="GO:0004831">
    <property type="term" value="F:tyrosine-tRNA ligase activity"/>
    <property type="evidence" value="ECO:0007669"/>
    <property type="project" value="UniProtKB-UniRule"/>
</dbReference>
<dbReference type="GO" id="GO:0006437">
    <property type="term" value="P:tyrosyl-tRNA aminoacylation"/>
    <property type="evidence" value="ECO:0007669"/>
    <property type="project" value="UniProtKB-UniRule"/>
</dbReference>
<dbReference type="CDD" id="cd00805">
    <property type="entry name" value="TyrRS_core"/>
    <property type="match status" value="1"/>
</dbReference>
<dbReference type="FunFam" id="1.10.240.10:FF:000001">
    <property type="entry name" value="Tyrosine--tRNA ligase"/>
    <property type="match status" value="1"/>
</dbReference>
<dbReference type="FunFam" id="3.40.50.620:FF:000008">
    <property type="entry name" value="Tyrosine--tRNA ligase"/>
    <property type="match status" value="1"/>
</dbReference>
<dbReference type="Gene3D" id="3.40.50.620">
    <property type="entry name" value="HUPs"/>
    <property type="match status" value="1"/>
</dbReference>
<dbReference type="Gene3D" id="3.10.290.10">
    <property type="entry name" value="RNA-binding S4 domain"/>
    <property type="match status" value="1"/>
</dbReference>
<dbReference type="Gene3D" id="1.10.240.10">
    <property type="entry name" value="Tyrosyl-Transfer RNA Synthetase"/>
    <property type="match status" value="1"/>
</dbReference>
<dbReference type="HAMAP" id="MF_02006">
    <property type="entry name" value="Tyr_tRNA_synth_type1"/>
    <property type="match status" value="1"/>
</dbReference>
<dbReference type="InterPro" id="IPR002305">
    <property type="entry name" value="aa-tRNA-synth_Ic"/>
</dbReference>
<dbReference type="InterPro" id="IPR014729">
    <property type="entry name" value="Rossmann-like_a/b/a_fold"/>
</dbReference>
<dbReference type="InterPro" id="IPR036986">
    <property type="entry name" value="S4_RNA-bd_sf"/>
</dbReference>
<dbReference type="InterPro" id="IPR002307">
    <property type="entry name" value="Tyr-tRNA-ligase"/>
</dbReference>
<dbReference type="InterPro" id="IPR024088">
    <property type="entry name" value="Tyr-tRNA-ligase_bac-type"/>
</dbReference>
<dbReference type="InterPro" id="IPR024107">
    <property type="entry name" value="Tyr-tRNA-ligase_bac_1"/>
</dbReference>
<dbReference type="NCBIfam" id="TIGR00234">
    <property type="entry name" value="tyrS"/>
    <property type="match status" value="1"/>
</dbReference>
<dbReference type="PANTHER" id="PTHR11766:SF0">
    <property type="entry name" value="TYROSINE--TRNA LIGASE, MITOCHONDRIAL"/>
    <property type="match status" value="1"/>
</dbReference>
<dbReference type="PANTHER" id="PTHR11766">
    <property type="entry name" value="TYROSYL-TRNA SYNTHETASE"/>
    <property type="match status" value="1"/>
</dbReference>
<dbReference type="Pfam" id="PF00579">
    <property type="entry name" value="tRNA-synt_1b"/>
    <property type="match status" value="1"/>
</dbReference>
<dbReference type="PRINTS" id="PR01040">
    <property type="entry name" value="TRNASYNTHTYR"/>
</dbReference>
<dbReference type="SUPFAM" id="SSF55174">
    <property type="entry name" value="Alpha-L RNA-binding motif"/>
    <property type="match status" value="1"/>
</dbReference>
<dbReference type="SUPFAM" id="SSF52374">
    <property type="entry name" value="Nucleotidylyl transferase"/>
    <property type="match status" value="1"/>
</dbReference>
<dbReference type="PROSITE" id="PS50889">
    <property type="entry name" value="S4"/>
    <property type="match status" value="1"/>
</dbReference>
<gene>
    <name evidence="1" type="primary">tyrS</name>
    <name type="ordered locus">SPO2484</name>
</gene>
<protein>
    <recommendedName>
        <fullName evidence="1">Tyrosine--tRNA ligase</fullName>
        <ecNumber evidence="1">6.1.1.1</ecNumber>
    </recommendedName>
    <alternativeName>
        <fullName evidence="1">Tyrosyl-tRNA synthetase</fullName>
        <shortName evidence="1">TyrRS</shortName>
    </alternativeName>
</protein>
<feature type="chain" id="PRO_0000234770" description="Tyrosine--tRNA ligase">
    <location>
        <begin position="1"/>
        <end position="415"/>
    </location>
</feature>
<feature type="domain" description="S4 RNA-binding" evidence="1">
    <location>
        <begin position="350"/>
        <end position="414"/>
    </location>
</feature>
<feature type="short sequence motif" description="'HIGH' region">
    <location>
        <begin position="45"/>
        <end position="54"/>
    </location>
</feature>
<feature type="short sequence motif" description="'KMSKS' region">
    <location>
        <begin position="238"/>
        <end position="242"/>
    </location>
</feature>
<feature type="binding site" evidence="1">
    <location>
        <position position="40"/>
    </location>
    <ligand>
        <name>L-tyrosine</name>
        <dbReference type="ChEBI" id="CHEBI:58315"/>
    </ligand>
</feature>
<feature type="binding site" evidence="1">
    <location>
        <position position="178"/>
    </location>
    <ligand>
        <name>L-tyrosine</name>
        <dbReference type="ChEBI" id="CHEBI:58315"/>
    </ligand>
</feature>
<feature type="binding site" evidence="1">
    <location>
        <position position="182"/>
    </location>
    <ligand>
        <name>L-tyrosine</name>
        <dbReference type="ChEBI" id="CHEBI:58315"/>
    </ligand>
</feature>
<feature type="binding site" evidence="1">
    <location>
        <position position="241"/>
    </location>
    <ligand>
        <name>ATP</name>
        <dbReference type="ChEBI" id="CHEBI:30616"/>
    </ligand>
</feature>
<accession>Q5LQK5</accession>
<reference key="1">
    <citation type="journal article" date="2004" name="Nature">
        <title>Genome sequence of Silicibacter pomeroyi reveals adaptations to the marine environment.</title>
        <authorList>
            <person name="Moran M.A."/>
            <person name="Buchan A."/>
            <person name="Gonzalez J.M."/>
            <person name="Heidelberg J.F."/>
            <person name="Whitman W.B."/>
            <person name="Kiene R.P."/>
            <person name="Henriksen J.R."/>
            <person name="King G.M."/>
            <person name="Belas R."/>
            <person name="Fuqua C."/>
            <person name="Brinkac L.M."/>
            <person name="Lewis M."/>
            <person name="Johri S."/>
            <person name="Weaver B."/>
            <person name="Pai G."/>
            <person name="Eisen J.A."/>
            <person name="Rahe E."/>
            <person name="Sheldon W.M."/>
            <person name="Ye W."/>
            <person name="Miller T.R."/>
            <person name="Carlton J."/>
            <person name="Rasko D.A."/>
            <person name="Paulsen I.T."/>
            <person name="Ren Q."/>
            <person name="Daugherty S.C."/>
            <person name="DeBoy R.T."/>
            <person name="Dodson R.J."/>
            <person name="Durkin A.S."/>
            <person name="Madupu R."/>
            <person name="Nelson W.C."/>
            <person name="Sullivan S.A."/>
            <person name="Rosovitz M.J."/>
            <person name="Haft D.H."/>
            <person name="Selengut J."/>
            <person name="Ward N."/>
        </authorList>
    </citation>
    <scope>NUCLEOTIDE SEQUENCE [LARGE SCALE GENOMIC DNA]</scope>
    <source>
        <strain>ATCC 700808 / DSM 15171 / DSS-3</strain>
    </source>
</reference>
<reference key="2">
    <citation type="journal article" date="2014" name="Stand. Genomic Sci.">
        <title>An updated genome annotation for the model marine bacterium Ruegeria pomeroyi DSS-3.</title>
        <authorList>
            <person name="Rivers A.R."/>
            <person name="Smith C.B."/>
            <person name="Moran M.A."/>
        </authorList>
    </citation>
    <scope>GENOME REANNOTATION</scope>
    <source>
        <strain>ATCC 700808 / DSM 15171 / DSS-3</strain>
    </source>
</reference>
<organism>
    <name type="scientific">Ruegeria pomeroyi (strain ATCC 700808 / DSM 15171 / DSS-3)</name>
    <name type="common">Silicibacter pomeroyi</name>
    <dbReference type="NCBI Taxonomy" id="246200"/>
    <lineage>
        <taxon>Bacteria</taxon>
        <taxon>Pseudomonadati</taxon>
        <taxon>Pseudomonadota</taxon>
        <taxon>Alphaproteobacteria</taxon>
        <taxon>Rhodobacterales</taxon>
        <taxon>Roseobacteraceae</taxon>
        <taxon>Ruegeria</taxon>
    </lineage>
</organism>
<name>SYY_RUEPO</name>
<keyword id="KW-0030">Aminoacyl-tRNA synthetase</keyword>
<keyword id="KW-0067">ATP-binding</keyword>
<keyword id="KW-0963">Cytoplasm</keyword>
<keyword id="KW-0436">Ligase</keyword>
<keyword id="KW-0547">Nucleotide-binding</keyword>
<keyword id="KW-0648">Protein biosynthesis</keyword>
<keyword id="KW-1185">Reference proteome</keyword>
<keyword id="KW-0694">RNA-binding</keyword>
<evidence type="ECO:0000255" key="1">
    <source>
        <dbReference type="HAMAP-Rule" id="MF_02006"/>
    </source>
</evidence>
<sequence>MTYHPKSDFIAVMMERGFLADCTDYQGLDEALMKGCQPGYIGFDATAKSLHVGSLIQIMMLRWLQKTGHKPITLMGGGTTKVGDPSFRADERPLLTPAQIDDNIAGIRKVFAAYIDYDSGAENAALMLNNEEWLDDLNYLDFLRDIGRHFSVNRMLSFESVKSRLDREQSLSFLEFNYMILQAYDFMELNRRYGCILQMGGSDQWGNIVNGIDLTRRVIDHEVYGLTSPLLTTSDGKKMGKSQDGAVWLNPDMRSPYEFWQFWRNTTDADVGRFLKLYTELPVGECDRLGALAGSEINAAKVILANEVTALCHGAEAAATAEATAREVFEKGGIGDDLPTLTLGAADLPASIVQLIVKTGLAKSGKEAKRLIAEDGARLNDAPLTDAGMMIEAGDLAAPIKLSAGKKRHALVQLG</sequence>
<comment type="function">
    <text evidence="1">Catalyzes the attachment of tyrosine to tRNA(Tyr) in a two-step reaction: tyrosine is first activated by ATP to form Tyr-AMP and then transferred to the acceptor end of tRNA(Tyr).</text>
</comment>
<comment type="catalytic activity">
    <reaction evidence="1">
        <text>tRNA(Tyr) + L-tyrosine + ATP = L-tyrosyl-tRNA(Tyr) + AMP + diphosphate + H(+)</text>
        <dbReference type="Rhea" id="RHEA:10220"/>
        <dbReference type="Rhea" id="RHEA-COMP:9706"/>
        <dbReference type="Rhea" id="RHEA-COMP:9707"/>
        <dbReference type="ChEBI" id="CHEBI:15378"/>
        <dbReference type="ChEBI" id="CHEBI:30616"/>
        <dbReference type="ChEBI" id="CHEBI:33019"/>
        <dbReference type="ChEBI" id="CHEBI:58315"/>
        <dbReference type="ChEBI" id="CHEBI:78442"/>
        <dbReference type="ChEBI" id="CHEBI:78536"/>
        <dbReference type="ChEBI" id="CHEBI:456215"/>
        <dbReference type="EC" id="6.1.1.1"/>
    </reaction>
</comment>
<comment type="subunit">
    <text evidence="1">Homodimer.</text>
</comment>
<comment type="subcellular location">
    <subcellularLocation>
        <location evidence="1">Cytoplasm</location>
    </subcellularLocation>
</comment>
<comment type="similarity">
    <text evidence="1">Belongs to the class-I aminoacyl-tRNA synthetase family. TyrS type 1 subfamily.</text>
</comment>
<proteinExistence type="inferred from homology"/>